<name>MLAF_ECOL6</name>
<evidence type="ECO:0000250" key="1">
    <source>
        <dbReference type="UniProtKB" id="P63386"/>
    </source>
</evidence>
<evidence type="ECO:0000255" key="2">
    <source>
        <dbReference type="PROSITE-ProRule" id="PRU00434"/>
    </source>
</evidence>
<evidence type="ECO:0000305" key="3"/>
<sequence length="269" mass="29097">MEQSVANLVDMRDVSFTRGNRCIFDNISLTVPRGKITAIMGPSGIGKTTLLRLIGGQIAPDHGEILFDGENIPAMSRSRLYTVRKRMSMLFQSGALFTDMNVFDNVAYPLREHTQLPAPLLHSTVMMKLEAVGLRGAAKLMPSELSGGMARRAALARAIALEPDLIMFDEPFVGQDPITMGVLVKLISELNSALGVTCVVVSHDVPEVLSIADHAWILADKKIVAHGSAQALQANPDPRVRQFLDGIADGPVPFRYPAGDYHADLLPGS</sequence>
<accession>P63387</accession>
<accession>P45393</accession>
<proteinExistence type="inferred from homology"/>
<gene>
    <name evidence="1" type="primary">mlaF</name>
    <name type="ordered locus">c3955</name>
</gene>
<dbReference type="EC" id="7.6.2.-" evidence="1"/>
<dbReference type="EMBL" id="AE014075">
    <property type="protein sequence ID" value="AAN82395.1"/>
    <property type="molecule type" value="Genomic_DNA"/>
</dbReference>
<dbReference type="RefSeq" id="WP_000438245.1">
    <property type="nucleotide sequence ID" value="NZ_CP051263.1"/>
</dbReference>
<dbReference type="SMR" id="P63387"/>
<dbReference type="STRING" id="199310.c3955"/>
<dbReference type="GeneID" id="93778786"/>
<dbReference type="KEGG" id="ecc:c3955"/>
<dbReference type="eggNOG" id="COG1127">
    <property type="taxonomic scope" value="Bacteria"/>
</dbReference>
<dbReference type="HOGENOM" id="CLU_000604_1_22_6"/>
<dbReference type="BioCyc" id="ECOL199310:C3955-MONOMER"/>
<dbReference type="Proteomes" id="UP000001410">
    <property type="component" value="Chromosome"/>
</dbReference>
<dbReference type="GO" id="GO:0005886">
    <property type="term" value="C:plasma membrane"/>
    <property type="evidence" value="ECO:0007669"/>
    <property type="project" value="UniProtKB-SubCell"/>
</dbReference>
<dbReference type="GO" id="GO:0005524">
    <property type="term" value="F:ATP binding"/>
    <property type="evidence" value="ECO:0007669"/>
    <property type="project" value="UniProtKB-KW"/>
</dbReference>
<dbReference type="GO" id="GO:0016887">
    <property type="term" value="F:ATP hydrolysis activity"/>
    <property type="evidence" value="ECO:0007669"/>
    <property type="project" value="InterPro"/>
</dbReference>
<dbReference type="CDD" id="cd03261">
    <property type="entry name" value="ABC_Org_Solvent_Resistant"/>
    <property type="match status" value="1"/>
</dbReference>
<dbReference type="FunFam" id="3.40.50.300:FF:000192">
    <property type="entry name" value="Phospholipid ABC transporter ATP-binding protein MlaF"/>
    <property type="match status" value="1"/>
</dbReference>
<dbReference type="Gene3D" id="3.40.50.300">
    <property type="entry name" value="P-loop containing nucleotide triphosphate hydrolases"/>
    <property type="match status" value="1"/>
</dbReference>
<dbReference type="InterPro" id="IPR003593">
    <property type="entry name" value="AAA+_ATPase"/>
</dbReference>
<dbReference type="InterPro" id="IPR003439">
    <property type="entry name" value="ABC_transporter-like_ATP-bd"/>
</dbReference>
<dbReference type="InterPro" id="IPR017871">
    <property type="entry name" value="ABC_transporter-like_CS"/>
</dbReference>
<dbReference type="InterPro" id="IPR027417">
    <property type="entry name" value="P-loop_NTPase"/>
</dbReference>
<dbReference type="NCBIfam" id="NF008809">
    <property type="entry name" value="PRK11831.1"/>
    <property type="match status" value="1"/>
</dbReference>
<dbReference type="PANTHER" id="PTHR43023:SF6">
    <property type="entry name" value="INTERMEMBRANE PHOSPHOLIPID TRANSPORT SYSTEM ATP-BINDING PROTEIN MLAF"/>
    <property type="match status" value="1"/>
</dbReference>
<dbReference type="PANTHER" id="PTHR43023">
    <property type="entry name" value="PROTEIN TRIGALACTOSYLDIACYLGLYCEROL 3, CHLOROPLASTIC"/>
    <property type="match status" value="1"/>
</dbReference>
<dbReference type="Pfam" id="PF00005">
    <property type="entry name" value="ABC_tran"/>
    <property type="match status" value="1"/>
</dbReference>
<dbReference type="SMART" id="SM00382">
    <property type="entry name" value="AAA"/>
    <property type="match status" value="1"/>
</dbReference>
<dbReference type="SUPFAM" id="SSF52540">
    <property type="entry name" value="P-loop containing nucleoside triphosphate hydrolases"/>
    <property type="match status" value="1"/>
</dbReference>
<dbReference type="PROSITE" id="PS00211">
    <property type="entry name" value="ABC_TRANSPORTER_1"/>
    <property type="match status" value="1"/>
</dbReference>
<dbReference type="PROSITE" id="PS50893">
    <property type="entry name" value="ABC_TRANSPORTER_2"/>
    <property type="match status" value="1"/>
</dbReference>
<feature type="chain" id="PRO_0000093172" description="Intermembrane phospholipid transport system ATP-binding protein MlaF">
    <location>
        <begin position="1"/>
        <end position="269"/>
    </location>
</feature>
<feature type="domain" description="ABC transporter" evidence="2">
    <location>
        <begin position="9"/>
        <end position="245"/>
    </location>
</feature>
<feature type="binding site" evidence="2">
    <location>
        <begin position="41"/>
        <end position="48"/>
    </location>
    <ligand>
        <name>ATP</name>
        <dbReference type="ChEBI" id="CHEBI:30616"/>
    </ligand>
</feature>
<keyword id="KW-0067">ATP-binding</keyword>
<keyword id="KW-0997">Cell inner membrane</keyword>
<keyword id="KW-1003">Cell membrane</keyword>
<keyword id="KW-0472">Membrane</keyword>
<keyword id="KW-0547">Nucleotide-binding</keyword>
<keyword id="KW-1185">Reference proteome</keyword>
<keyword id="KW-1278">Translocase</keyword>
<keyword id="KW-0813">Transport</keyword>
<comment type="function">
    <text evidence="1">Part of the ABC transporter complex MlaFEDB, which is involved in a phospholipid transport pathway that maintains lipid asymmetry in the outer membrane by retrograde trafficking of phospholipids from the outer membrane to the inner membrane. Responsible for energy coupling to the transport system.</text>
</comment>
<comment type="subunit">
    <text evidence="1">The complex is composed of two ATP-binding proteins (MlaF), two transmembrane proteins (MlaE), two cytoplasmic solute-binding proteins (MlaB) and six periplasmic solute-binding proteins (MlaD).</text>
</comment>
<comment type="subcellular location">
    <subcellularLocation>
        <location evidence="1">Cell inner membrane</location>
        <topology evidence="1">Peripheral membrane protein</topology>
        <orientation evidence="1">Cytoplasmic side</orientation>
    </subcellularLocation>
</comment>
<comment type="similarity">
    <text evidence="3">Belongs to the ABC transporter superfamily. MlaF family.</text>
</comment>
<reference key="1">
    <citation type="journal article" date="2002" name="Proc. Natl. Acad. Sci. U.S.A.">
        <title>Extensive mosaic structure revealed by the complete genome sequence of uropathogenic Escherichia coli.</title>
        <authorList>
            <person name="Welch R.A."/>
            <person name="Burland V."/>
            <person name="Plunkett G. III"/>
            <person name="Redford P."/>
            <person name="Roesch P."/>
            <person name="Rasko D."/>
            <person name="Buckles E.L."/>
            <person name="Liou S.-R."/>
            <person name="Boutin A."/>
            <person name="Hackett J."/>
            <person name="Stroud D."/>
            <person name="Mayhew G.F."/>
            <person name="Rose D.J."/>
            <person name="Zhou S."/>
            <person name="Schwartz D.C."/>
            <person name="Perna N.T."/>
            <person name="Mobley H.L.T."/>
            <person name="Donnenberg M.S."/>
            <person name="Blattner F.R."/>
        </authorList>
    </citation>
    <scope>NUCLEOTIDE SEQUENCE [LARGE SCALE GENOMIC DNA]</scope>
    <source>
        <strain>CFT073 / ATCC 700928 / UPEC</strain>
    </source>
</reference>
<protein>
    <recommendedName>
        <fullName evidence="1">Intermembrane phospholipid transport system ATP-binding protein MlaF</fullName>
        <ecNumber evidence="1">7.6.2.-</ecNumber>
    </recommendedName>
</protein>
<organism>
    <name type="scientific">Escherichia coli O6:H1 (strain CFT073 / ATCC 700928 / UPEC)</name>
    <dbReference type="NCBI Taxonomy" id="199310"/>
    <lineage>
        <taxon>Bacteria</taxon>
        <taxon>Pseudomonadati</taxon>
        <taxon>Pseudomonadota</taxon>
        <taxon>Gammaproteobacteria</taxon>
        <taxon>Enterobacterales</taxon>
        <taxon>Enterobacteriaceae</taxon>
        <taxon>Escherichia</taxon>
    </lineage>
</organism>